<protein>
    <recommendedName>
        <fullName>RNA-binding protein 8A</fullName>
    </recommendedName>
    <alternativeName>
        <fullName>RNA-binding motif protein 8A</fullName>
    </alternativeName>
    <alternativeName>
        <fullName>Ribonucleoprotein RBM8A</fullName>
    </alternativeName>
</protein>
<comment type="function">
    <text evidence="1">Required for pre-mRNA splicing as component of the spliceosome (By similarity). Core component of the splicing-dependent multiprotein exon junction complex (EJC) deposited at splice junctions on mRNAs. The EJC is a dynamic structure consisting of core proteins and several peripheral nuclear and cytoplasmic associated factors that join the complex only transiently either during EJC assembly or during subsequent mRNA metabolism. The EJC marks the position of the exon-exon junction in the mature mRNA for the gene expression machinery and the core components remain bound to spliced mRNAs throughout all stages of mRNA metabolism thereby influencing downstream processes including nuclear mRNA export, subcellular mRNA localization, translation efficiency and nonsense-mediated mRNA decay (NMD). Its removal from cytoplasmic mRNAs requires translation initiation from EJC-bearing spliced mRNAs. Associates preferentially with mRNAs produced by splicing. Does not interact with pre-mRNAs, introns, or mRNAs produced from intronless cDNAs. Associates with both nuclear mRNAs and newly exported cytoplasmic mRNAs (By similarity).</text>
</comment>
<comment type="subunit">
    <text evidence="1">Heterodimer with either MAGOH or MAGOHB. Part of the mRNA splicing-dependent exon junction complex (EJC) complex; the core complex contains CASC3, EIF4A3, MAGOH or MAGOHB, and RBM8A. Component of the ALYREF/THOC4-EJC-RNA complex; in the complex interacts with EIF4A3 and MAGOH; these interactions are likely specific to RNA-bound EJC (By similarity). Interacts with PYM1; the interaction is direct and dissociates the EJC from spliced mRNAs. Part of a complex that contains the EJC core components CASC3, EIF4A3, MAGOH and RBM8A plus proteins involved in nonsense-mediated mRNA decay, such as UPF1, UPF2, UPF3A and UPF3B. Found in a post-splicing complex with NXF1, MAGOH, UPF1, UPF2, UPF3A, UPF3B and RNPS1. Interacts with DDX39B, MAGOH, DPH1, UPF3B, RNPS1, SRRM1 and ALYREF/THOC4. Interacts with IPO13; the interaction mediates the nuclear import of the MAGOH-RBM8A heterodimer. Identified in the spliceosome C complex. Associates with polysomes.</text>
</comment>
<comment type="subcellular location">
    <subcellularLocation>
        <location evidence="4">Nucleus</location>
    </subcellularLocation>
    <subcellularLocation>
        <location evidence="4">Nucleus speckle</location>
    </subcellularLocation>
    <subcellularLocation>
        <location evidence="4">Cytoplasm</location>
    </subcellularLocation>
    <text evidence="1">Nucleocytoplasmic shuttling protein. Travels to the cytoplasm as part of the exon junction complex (EJC) bound to mRNA. Colocalizes with the core EJC, ALYREF/THOC4, NXF1 and UAP56 in the nucleus and nuclear speckles.</text>
</comment>
<comment type="similarity">
    <text evidence="5">Belongs to the RBM8A family.</text>
</comment>
<organism>
    <name type="scientific">Rattus norvegicus</name>
    <name type="common">Rat</name>
    <dbReference type="NCBI Taxonomy" id="10116"/>
    <lineage>
        <taxon>Eukaryota</taxon>
        <taxon>Metazoa</taxon>
        <taxon>Chordata</taxon>
        <taxon>Craniata</taxon>
        <taxon>Vertebrata</taxon>
        <taxon>Euteleostomi</taxon>
        <taxon>Mammalia</taxon>
        <taxon>Eutheria</taxon>
        <taxon>Euarchontoglires</taxon>
        <taxon>Glires</taxon>
        <taxon>Rodentia</taxon>
        <taxon>Myomorpha</taxon>
        <taxon>Muroidea</taxon>
        <taxon>Muridae</taxon>
        <taxon>Murinae</taxon>
        <taxon>Rattus</taxon>
    </lineage>
</organism>
<sequence>MADVLDLHEAGGEDFAMDEDGDESIHKLKEKAKKRKGRGFGSEEGSRARMREDYDSVEQDGDEPGPQRSVEGWILFVTGVHEEATEEDIHDKFAEYGEIKNIHLNLDRRTGYLKGYTLVEYETYKEAQAAMEGLNGQDLMGQPISVDWCFVRGPPKGKRRGGRRRSRSPDRRRR</sequence>
<gene>
    <name type="primary">Rbm8a</name>
    <name type="synonym">Rbm8</name>
</gene>
<reference key="1">
    <citation type="journal article" date="2005" name="Proc. Natl. Acad. Sci. U.S.A.">
        <title>RNA splicing capability of live neuronal dendrites.</title>
        <authorList>
            <person name="Glanzer J."/>
            <person name="Miyashiro K.Y."/>
            <person name="Sul J.-Y."/>
            <person name="Barrett L."/>
            <person name="Belt B."/>
            <person name="Haydon P."/>
            <person name="Eberwine J."/>
        </authorList>
    </citation>
    <scope>NUCLEOTIDE SEQUENCE [MRNA]</scope>
    <scope>SUBCELLULAR LOCATION</scope>
    <source>
        <strain>Sprague-Dawley</strain>
        <tissue>Hippocampus</tissue>
    </source>
</reference>
<reference key="2">
    <citation type="journal article" date="2012" name="Nat. Commun.">
        <title>Quantitative maps of protein phosphorylation sites across 14 different rat organs and tissues.</title>
        <authorList>
            <person name="Lundby A."/>
            <person name="Secher A."/>
            <person name="Lage K."/>
            <person name="Nordsborg N.B."/>
            <person name="Dmytriyev A."/>
            <person name="Lundby C."/>
            <person name="Olsen J.V."/>
        </authorList>
    </citation>
    <scope>PHOSPHORYLATION [LARGE SCALE ANALYSIS] AT SER-42 AND SER-56</scope>
    <scope>IDENTIFICATION BY MASS SPECTROMETRY [LARGE SCALE ANALYSIS]</scope>
</reference>
<name>RBM8A_RAT</name>
<feature type="initiator methionine" description="Removed" evidence="1">
    <location>
        <position position="1"/>
    </location>
</feature>
<feature type="chain" id="PRO_0000378563" description="RNA-binding protein 8A">
    <location>
        <begin position="2"/>
        <end position="174"/>
    </location>
</feature>
<feature type="domain" description="RRM" evidence="2">
    <location>
        <begin position="73"/>
        <end position="151"/>
    </location>
</feature>
<feature type="region of interest" description="Disordered" evidence="3">
    <location>
        <begin position="1"/>
        <end position="70"/>
    </location>
</feature>
<feature type="region of interest" description="Disordered" evidence="3">
    <location>
        <begin position="151"/>
        <end position="174"/>
    </location>
</feature>
<feature type="compositionally biased region" description="Basic and acidic residues" evidence="3">
    <location>
        <begin position="1"/>
        <end position="11"/>
    </location>
</feature>
<feature type="compositionally biased region" description="Basic residues" evidence="3">
    <location>
        <begin position="28"/>
        <end position="38"/>
    </location>
</feature>
<feature type="compositionally biased region" description="Basic and acidic residues" evidence="3">
    <location>
        <begin position="44"/>
        <end position="54"/>
    </location>
</feature>
<feature type="compositionally biased region" description="Basic residues" evidence="3">
    <location>
        <begin position="155"/>
        <end position="174"/>
    </location>
</feature>
<feature type="modified residue" description="N-acetylalanine" evidence="1">
    <location>
        <position position="2"/>
    </location>
</feature>
<feature type="modified residue" description="Phosphoserine" evidence="1">
    <location>
        <position position="24"/>
    </location>
</feature>
<feature type="modified residue" description="Phosphoserine" evidence="6">
    <location>
        <position position="42"/>
    </location>
</feature>
<feature type="modified residue" description="Phosphoserine" evidence="6">
    <location>
        <position position="56"/>
    </location>
</feature>
<feature type="cross-link" description="Glycyl lysine isopeptide (Lys-Gly) (interchain with G-Cter in SUMO2)" evidence="1">
    <location>
        <position position="27"/>
    </location>
</feature>
<dbReference type="EMBL" id="DQ359102">
    <property type="protein sequence ID" value="ABD46661.1"/>
    <property type="molecule type" value="mRNA"/>
</dbReference>
<dbReference type="RefSeq" id="NP_001258067.1">
    <property type="nucleotide sequence ID" value="NM_001271138.1"/>
</dbReference>
<dbReference type="SMR" id="Q27W01"/>
<dbReference type="BioGRID" id="254951">
    <property type="interactions" value="2"/>
</dbReference>
<dbReference type="FunCoup" id="Q27W01">
    <property type="interactions" value="4454"/>
</dbReference>
<dbReference type="IntAct" id="Q27W01">
    <property type="interactions" value="2"/>
</dbReference>
<dbReference type="STRING" id="10116.ENSRNOP00000028807"/>
<dbReference type="iPTMnet" id="Q27W01"/>
<dbReference type="PhosphoSitePlus" id="Q27W01"/>
<dbReference type="jPOST" id="Q27W01"/>
<dbReference type="PaxDb" id="10116-ENSRNOP00000028807"/>
<dbReference type="Ensembl" id="ENSRNOT00000028807.8">
    <property type="protein sequence ID" value="ENSRNOP00000028807.4"/>
    <property type="gene ID" value="ENSRNOG00000021215.8"/>
</dbReference>
<dbReference type="GeneID" id="295284"/>
<dbReference type="KEGG" id="rno:295284"/>
<dbReference type="UCSC" id="RGD:1310099">
    <property type="organism name" value="rat"/>
</dbReference>
<dbReference type="AGR" id="RGD:1310099"/>
<dbReference type="CTD" id="9939"/>
<dbReference type="RGD" id="1310099">
    <property type="gene designation" value="Rbm8a"/>
</dbReference>
<dbReference type="eggNOG" id="KOG0130">
    <property type="taxonomic scope" value="Eukaryota"/>
</dbReference>
<dbReference type="GeneTree" id="ENSGT00730000111185"/>
<dbReference type="HOGENOM" id="CLU_012062_18_3_1"/>
<dbReference type="InParanoid" id="Q27W01"/>
<dbReference type="OMA" id="IYNHEEF"/>
<dbReference type="OrthoDB" id="71081at9989"/>
<dbReference type="PhylomeDB" id="Q27W01"/>
<dbReference type="TreeFam" id="TF314933"/>
<dbReference type="Reactome" id="R-RNO-159236">
    <property type="pathway name" value="Transport of Mature mRNA derived from an Intron-Containing Transcript"/>
</dbReference>
<dbReference type="Reactome" id="R-RNO-72163">
    <property type="pathway name" value="mRNA Splicing - Major Pathway"/>
</dbReference>
<dbReference type="Reactome" id="R-RNO-72187">
    <property type="pathway name" value="mRNA 3'-end processing"/>
</dbReference>
<dbReference type="Reactome" id="R-RNO-73856">
    <property type="pathway name" value="RNA Polymerase II Transcription Termination"/>
</dbReference>
<dbReference type="Reactome" id="R-RNO-975957">
    <property type="pathway name" value="Nonsense Mediated Decay (NMD) enhanced by the Exon Junction Complex (EJC)"/>
</dbReference>
<dbReference type="PRO" id="PR:Q27W01"/>
<dbReference type="Proteomes" id="UP000002494">
    <property type="component" value="Chromosome 2"/>
</dbReference>
<dbReference type="Bgee" id="ENSRNOG00000021215">
    <property type="expression patterns" value="Expressed in thymus and 20 other cell types or tissues"/>
</dbReference>
<dbReference type="GO" id="GO:0071013">
    <property type="term" value="C:catalytic step 2 spliceosome"/>
    <property type="evidence" value="ECO:0000266"/>
    <property type="project" value="RGD"/>
</dbReference>
<dbReference type="GO" id="GO:0005737">
    <property type="term" value="C:cytoplasm"/>
    <property type="evidence" value="ECO:0007669"/>
    <property type="project" value="UniProtKB-SubCell"/>
</dbReference>
<dbReference type="GO" id="GO:0030425">
    <property type="term" value="C:dendrite"/>
    <property type="evidence" value="ECO:0000314"/>
    <property type="project" value="RGD"/>
</dbReference>
<dbReference type="GO" id="GO:0035145">
    <property type="term" value="C:exon-exon junction complex"/>
    <property type="evidence" value="ECO:0000266"/>
    <property type="project" value="RGD"/>
</dbReference>
<dbReference type="GO" id="GO:1990501">
    <property type="term" value="C:exon-exon junction subcomplex mago-y14"/>
    <property type="evidence" value="ECO:0000266"/>
    <property type="project" value="RGD"/>
</dbReference>
<dbReference type="GO" id="GO:0043025">
    <property type="term" value="C:neuronal cell body"/>
    <property type="evidence" value="ECO:0000314"/>
    <property type="project" value="RGD"/>
</dbReference>
<dbReference type="GO" id="GO:0016607">
    <property type="term" value="C:nuclear speck"/>
    <property type="evidence" value="ECO:0007669"/>
    <property type="project" value="UniProtKB-SubCell"/>
</dbReference>
<dbReference type="GO" id="GO:0005634">
    <property type="term" value="C:nucleus"/>
    <property type="evidence" value="ECO:0000266"/>
    <property type="project" value="RGD"/>
</dbReference>
<dbReference type="GO" id="GO:0071006">
    <property type="term" value="C:U2-type catalytic step 1 spliceosome"/>
    <property type="evidence" value="ECO:0000250"/>
    <property type="project" value="UniProtKB"/>
</dbReference>
<dbReference type="GO" id="GO:0003729">
    <property type="term" value="F:mRNA binding"/>
    <property type="evidence" value="ECO:0000266"/>
    <property type="project" value="RGD"/>
</dbReference>
<dbReference type="GO" id="GO:0000398">
    <property type="term" value="P:mRNA splicing, via spliceosome"/>
    <property type="evidence" value="ECO:0000250"/>
    <property type="project" value="UniProtKB"/>
</dbReference>
<dbReference type="GO" id="GO:0051028">
    <property type="term" value="P:mRNA transport"/>
    <property type="evidence" value="ECO:0007669"/>
    <property type="project" value="UniProtKB-KW"/>
</dbReference>
<dbReference type="GO" id="GO:0000184">
    <property type="term" value="P:nuclear-transcribed mRNA catabolic process, nonsense-mediated decay"/>
    <property type="evidence" value="ECO:0000266"/>
    <property type="project" value="RGD"/>
</dbReference>
<dbReference type="GO" id="GO:0000381">
    <property type="term" value="P:regulation of alternative mRNA splicing, via spliceosome"/>
    <property type="evidence" value="ECO:0000250"/>
    <property type="project" value="UniProtKB"/>
</dbReference>
<dbReference type="GO" id="GO:0050684">
    <property type="term" value="P:regulation of mRNA processing"/>
    <property type="evidence" value="ECO:0000266"/>
    <property type="project" value="RGD"/>
</dbReference>
<dbReference type="GO" id="GO:2000622">
    <property type="term" value="P:regulation of nuclear-transcribed mRNA catabolic process, nonsense-mediated decay"/>
    <property type="evidence" value="ECO:0000266"/>
    <property type="project" value="RGD"/>
</dbReference>
<dbReference type="GO" id="GO:0006417">
    <property type="term" value="P:regulation of translation"/>
    <property type="evidence" value="ECO:0007669"/>
    <property type="project" value="UniProtKB-KW"/>
</dbReference>
<dbReference type="GO" id="GO:0008380">
    <property type="term" value="P:RNA splicing"/>
    <property type="evidence" value="ECO:0000318"/>
    <property type="project" value="GO_Central"/>
</dbReference>
<dbReference type="CDD" id="cd12324">
    <property type="entry name" value="RRM_RBM8"/>
    <property type="match status" value="1"/>
</dbReference>
<dbReference type="FunFam" id="3.30.70.330:FF:000157">
    <property type="entry name" value="RNA-binding protein 8A"/>
    <property type="match status" value="1"/>
</dbReference>
<dbReference type="Gene3D" id="3.30.70.330">
    <property type="match status" value="1"/>
</dbReference>
<dbReference type="InterPro" id="IPR012677">
    <property type="entry name" value="Nucleotide-bd_a/b_plait_sf"/>
</dbReference>
<dbReference type="InterPro" id="IPR035979">
    <property type="entry name" value="RBD_domain_sf"/>
</dbReference>
<dbReference type="InterPro" id="IPR008111">
    <property type="entry name" value="RNA-bd_8"/>
</dbReference>
<dbReference type="InterPro" id="IPR000504">
    <property type="entry name" value="RRM_dom"/>
</dbReference>
<dbReference type="InterPro" id="IPR033744">
    <property type="entry name" value="RRM_RBM8"/>
</dbReference>
<dbReference type="PANTHER" id="PTHR45894">
    <property type="entry name" value="RNA-BINDING PROTEIN 8A"/>
    <property type="match status" value="1"/>
</dbReference>
<dbReference type="Pfam" id="PF00076">
    <property type="entry name" value="RRM_1"/>
    <property type="match status" value="1"/>
</dbReference>
<dbReference type="PRINTS" id="PR01738">
    <property type="entry name" value="RNABINDINGM8"/>
</dbReference>
<dbReference type="SMART" id="SM00360">
    <property type="entry name" value="RRM"/>
    <property type="match status" value="1"/>
</dbReference>
<dbReference type="SUPFAM" id="SSF54928">
    <property type="entry name" value="RNA-binding domain, RBD"/>
    <property type="match status" value="1"/>
</dbReference>
<dbReference type="PROSITE" id="PS50102">
    <property type="entry name" value="RRM"/>
    <property type="match status" value="1"/>
</dbReference>
<proteinExistence type="evidence at protein level"/>
<keyword id="KW-0007">Acetylation</keyword>
<keyword id="KW-0963">Cytoplasm</keyword>
<keyword id="KW-1017">Isopeptide bond</keyword>
<keyword id="KW-0507">mRNA processing</keyword>
<keyword id="KW-0508">mRNA splicing</keyword>
<keyword id="KW-0509">mRNA transport</keyword>
<keyword id="KW-0866">Nonsense-mediated mRNA decay</keyword>
<keyword id="KW-0539">Nucleus</keyword>
<keyword id="KW-0597">Phosphoprotein</keyword>
<keyword id="KW-1185">Reference proteome</keyword>
<keyword id="KW-0694">RNA-binding</keyword>
<keyword id="KW-0747">Spliceosome</keyword>
<keyword id="KW-0810">Translation regulation</keyword>
<keyword id="KW-0813">Transport</keyword>
<keyword id="KW-0832">Ubl conjugation</keyword>
<accession>Q27W01</accession>
<evidence type="ECO:0000250" key="1">
    <source>
        <dbReference type="UniProtKB" id="Q9Y5S9"/>
    </source>
</evidence>
<evidence type="ECO:0000255" key="2">
    <source>
        <dbReference type="PROSITE-ProRule" id="PRU00176"/>
    </source>
</evidence>
<evidence type="ECO:0000256" key="3">
    <source>
        <dbReference type="SAM" id="MobiDB-lite"/>
    </source>
</evidence>
<evidence type="ECO:0000269" key="4">
    <source>
    </source>
</evidence>
<evidence type="ECO:0000305" key="5"/>
<evidence type="ECO:0007744" key="6">
    <source>
    </source>
</evidence>